<gene>
    <name evidence="5" type="primary">pgmH</name>
    <name type="ORF">ATEG_06211</name>
</gene>
<comment type="function">
    <text evidence="3 4 7">FAD-linked oxidoreductase; part of the gene cluster that mediates the biosynthesis of pleosporalin A, ascomycone A, as well as a third cryptic naphthoquinone derived pigment, all responsible for the coloration of conidia (PubMed:28471414, PubMed:35351612). Essential for the production of pleosporalin A, but not the 2 other final products (PubMed:35351612). The pathway begins with the biosynthesis of the cyclized heptaketide 3-acetonyl-1,6,8-trihydroxy-2-naphthaldehyde by the NR-PKS pgmA. The C-6 hydroxyl group is further methylated by the O-methyltransferase pgmB to yield fusarubinaldehyde which is in turn oxidized by the cytochrome P450 monooxygenase pgmC at C-9. The C-1 hydroxyl group is then methylated spontaneously. Although pgmE, pgmD and pgmH are essential for the production of pleosporalin A, it is not the case for the 2 other final products and it remains difficult to assign a specific function to each enzyme. PgmF and pgmG seem not to be involved in pigment biosynthesis although they were regulated by the cluster-specific transcription factor pgmR (Probable) (PubMed:35351612).</text>
</comment>
<comment type="cofactor">
    <cofactor evidence="1">
        <name>FAD</name>
        <dbReference type="ChEBI" id="CHEBI:57692"/>
    </cofactor>
</comment>
<comment type="pathway">
    <text evidence="4">Pigment biosynthesis.</text>
</comment>
<comment type="pathway">
    <text evidence="4">Secondary metabolite biosynthesis.</text>
</comment>
<comment type="induction">
    <text evidence="3 4">Expression is significantly up-regulated at the end of late growth phase, in the presence of Butyrolactone I (PubMed:28471414). Expression is positively regulated by the pgm cluster-specific transcription factor pgmR (PubMed:35351612).</text>
</comment>
<comment type="disruption phenotype">
    <text evidence="4">Only abolishes the production of pleosporalin A but not of the 2 other final products.</text>
</comment>
<comment type="similarity">
    <text evidence="6">Belongs to the oxygen-dependent FAD-linked oxidoreductase family.</text>
</comment>
<reference key="1">
    <citation type="submission" date="2005-09" db="EMBL/GenBank/DDBJ databases">
        <title>Annotation of the Aspergillus terreus NIH2624 genome.</title>
        <authorList>
            <person name="Birren B.W."/>
            <person name="Lander E.S."/>
            <person name="Galagan J.E."/>
            <person name="Nusbaum C."/>
            <person name="Devon K."/>
            <person name="Henn M."/>
            <person name="Ma L.-J."/>
            <person name="Jaffe D.B."/>
            <person name="Butler J."/>
            <person name="Alvarez P."/>
            <person name="Gnerre S."/>
            <person name="Grabherr M."/>
            <person name="Kleber M."/>
            <person name="Mauceli E.W."/>
            <person name="Brockman W."/>
            <person name="Rounsley S."/>
            <person name="Young S.K."/>
            <person name="LaButti K."/>
            <person name="Pushparaj V."/>
            <person name="DeCaprio D."/>
            <person name="Crawford M."/>
            <person name="Koehrsen M."/>
            <person name="Engels R."/>
            <person name="Montgomery P."/>
            <person name="Pearson M."/>
            <person name="Howarth C."/>
            <person name="Larson L."/>
            <person name="Luoma S."/>
            <person name="White J."/>
            <person name="Alvarado L."/>
            <person name="Kodira C.D."/>
            <person name="Zeng Q."/>
            <person name="Oleary S."/>
            <person name="Yandava C."/>
            <person name="Denning D.W."/>
            <person name="Nierman W.C."/>
            <person name="Milne T."/>
            <person name="Madden K."/>
        </authorList>
    </citation>
    <scope>NUCLEOTIDE SEQUENCE [LARGE SCALE GENOMIC DNA]</scope>
    <source>
        <strain>NIH 2624 / FGSC A1156</strain>
    </source>
</reference>
<reference key="2">
    <citation type="journal article" date="2017" name="Microorganisms">
        <title>Melanisation of Aspergillus terreus-is butyrolactone I involved in the regulation of both DOPA and DHN types of pigments in submerged culture?</title>
        <authorList>
            <person name="Palonen E.K."/>
            <person name="Raina S."/>
            <person name="Brandt A."/>
            <person name="Meriluoto J."/>
            <person name="Keshavarz T."/>
            <person name="Soini J.T."/>
        </authorList>
    </citation>
    <scope>IDENTIFICATION</scope>
    <scope>FUNCTION</scope>
    <scope>INDUCTION</scope>
    <source>
        <strain>MUCL38669</strain>
    </source>
</reference>
<reference key="3">
    <citation type="journal article" date="2022" name="Fungal Genet. Biol.">
        <title>Identification of a polyketide biosynthesis gene cluster by transcriptional regulator activation in Aspergillus terreus.</title>
        <authorList>
            <person name="Tang S."/>
            <person name="Men P."/>
            <person name="Zhang W."/>
            <person name="Li H."/>
            <person name="Li Z."/>
            <person name="Huang X."/>
            <person name="Lu X."/>
        </authorList>
    </citation>
    <scope>FUNCTION</scope>
    <scope>INDUCTION</scope>
    <scope>DISRUPTION PHENOTYPE</scope>
    <scope>PATHWAY</scope>
</reference>
<proteinExistence type="evidence at transcript level"/>
<organism>
    <name type="scientific">Aspergillus terreus (strain NIH 2624 / FGSC A1156)</name>
    <dbReference type="NCBI Taxonomy" id="341663"/>
    <lineage>
        <taxon>Eukaryota</taxon>
        <taxon>Fungi</taxon>
        <taxon>Dikarya</taxon>
        <taxon>Ascomycota</taxon>
        <taxon>Pezizomycotina</taxon>
        <taxon>Eurotiomycetes</taxon>
        <taxon>Eurotiomycetidae</taxon>
        <taxon>Eurotiales</taxon>
        <taxon>Aspergillaceae</taxon>
        <taxon>Aspergillus</taxon>
        <taxon>Aspergillus subgen. Circumdati</taxon>
    </lineage>
</organism>
<feature type="chain" id="PRO_0000456014" description="FAD-linked oxidoreductase pgmH">
    <location>
        <begin position="1"/>
        <end position="483"/>
    </location>
</feature>
<feature type="domain" description="FAD-binding PCMH-type" evidence="2">
    <location>
        <begin position="54"/>
        <end position="215"/>
    </location>
</feature>
<evidence type="ECO:0000250" key="1">
    <source>
        <dbReference type="UniProtKB" id="Q5BEJ5"/>
    </source>
</evidence>
<evidence type="ECO:0000255" key="2">
    <source>
        <dbReference type="PROSITE-ProRule" id="PRU00718"/>
    </source>
</evidence>
<evidence type="ECO:0000269" key="3">
    <source>
    </source>
</evidence>
<evidence type="ECO:0000269" key="4">
    <source>
    </source>
</evidence>
<evidence type="ECO:0000303" key="5">
    <source>
    </source>
</evidence>
<evidence type="ECO:0000305" key="6"/>
<evidence type="ECO:0000305" key="7">
    <source>
    </source>
</evidence>
<keyword id="KW-0274">FAD</keyword>
<keyword id="KW-0285">Flavoprotein</keyword>
<keyword id="KW-0560">Oxidoreductase</keyword>
<keyword id="KW-1185">Reference proteome</keyword>
<name>PGMH_ASPTN</name>
<dbReference type="EC" id="1.1.1.-" evidence="7"/>
<dbReference type="EMBL" id="CH476601">
    <property type="protein sequence ID" value="EAU33972.1"/>
    <property type="molecule type" value="Genomic_DNA"/>
</dbReference>
<dbReference type="RefSeq" id="XP_001215389.1">
    <property type="nucleotide sequence ID" value="XM_001215389.1"/>
</dbReference>
<dbReference type="SMR" id="Q0CJC3"/>
<dbReference type="STRING" id="341663.Q0CJC3"/>
<dbReference type="EnsemblFungi" id="EAU33972">
    <property type="protein sequence ID" value="EAU33972"/>
    <property type="gene ID" value="ATEG_06211"/>
</dbReference>
<dbReference type="GeneID" id="4321298"/>
<dbReference type="VEuPathDB" id="FungiDB:ATEG_06211"/>
<dbReference type="eggNOG" id="KOG1231">
    <property type="taxonomic scope" value="Eukaryota"/>
</dbReference>
<dbReference type="HOGENOM" id="CLU_018354_10_0_1"/>
<dbReference type="OMA" id="HYWMAVQ"/>
<dbReference type="OrthoDB" id="415825at2759"/>
<dbReference type="Proteomes" id="UP000007963">
    <property type="component" value="Unassembled WGS sequence"/>
</dbReference>
<dbReference type="GO" id="GO:0071949">
    <property type="term" value="F:FAD binding"/>
    <property type="evidence" value="ECO:0007669"/>
    <property type="project" value="InterPro"/>
</dbReference>
<dbReference type="GO" id="GO:0016491">
    <property type="term" value="F:oxidoreductase activity"/>
    <property type="evidence" value="ECO:0007669"/>
    <property type="project" value="UniProtKB-KW"/>
</dbReference>
<dbReference type="Gene3D" id="3.30.465.10">
    <property type="match status" value="1"/>
</dbReference>
<dbReference type="Gene3D" id="3.40.462.20">
    <property type="match status" value="1"/>
</dbReference>
<dbReference type="Gene3D" id="3.30.43.10">
    <property type="entry name" value="Uridine Diphospho-n-acetylenolpyruvylglucosamine Reductase, domain 2"/>
    <property type="match status" value="1"/>
</dbReference>
<dbReference type="InterPro" id="IPR016166">
    <property type="entry name" value="FAD-bd_PCMH"/>
</dbReference>
<dbReference type="InterPro" id="IPR036318">
    <property type="entry name" value="FAD-bd_PCMH-like_sf"/>
</dbReference>
<dbReference type="InterPro" id="IPR016167">
    <property type="entry name" value="FAD-bd_PCMH_sub1"/>
</dbReference>
<dbReference type="InterPro" id="IPR016169">
    <property type="entry name" value="FAD-bd_PCMH_sub2"/>
</dbReference>
<dbReference type="InterPro" id="IPR050416">
    <property type="entry name" value="FAD-linked_Oxidoreductase"/>
</dbReference>
<dbReference type="InterPro" id="IPR006094">
    <property type="entry name" value="Oxid_FAD_bind_N"/>
</dbReference>
<dbReference type="PANTHER" id="PTHR42973">
    <property type="entry name" value="BINDING OXIDOREDUCTASE, PUTATIVE (AFU_ORTHOLOGUE AFUA_1G17690)-RELATED"/>
    <property type="match status" value="1"/>
</dbReference>
<dbReference type="PANTHER" id="PTHR42973:SF39">
    <property type="entry name" value="FAD-BINDING PCMH-TYPE DOMAIN-CONTAINING PROTEIN"/>
    <property type="match status" value="1"/>
</dbReference>
<dbReference type="Pfam" id="PF01565">
    <property type="entry name" value="FAD_binding_4"/>
    <property type="match status" value="1"/>
</dbReference>
<dbReference type="SUPFAM" id="SSF56176">
    <property type="entry name" value="FAD-binding/transporter-associated domain-like"/>
    <property type="match status" value="1"/>
</dbReference>
<dbReference type="PROSITE" id="PS51387">
    <property type="entry name" value="FAD_PCMH"/>
    <property type="match status" value="1"/>
</dbReference>
<accession>Q0CJC3</accession>
<protein>
    <recommendedName>
        <fullName evidence="5">FAD-linked oxidoreductase pgmH</fullName>
        <ecNumber evidence="7">1.1.1.-</ecNumber>
    </recommendedName>
    <alternativeName>
        <fullName evidence="5">Pigmented naphthoquinones biosynthesis cluster protein H</fullName>
    </alternativeName>
</protein>
<sequence>MDPNIMWQARNDGSGLLEEDIQQLRSSIRGTVVLKNEASEEEYNAAVTRWNNVSIRLATLVVYVEDEQDIVKCVEFVNKHYLDVAVCSHGRHSYHGASSSTGMVIDLGRMRKVSVDKEAMTVTAQGGCIARDVELPLEAEGLAAVFGAVNETGVGFLTGAHGLAADNLVSARMVLANGQVVTASDDENSDLFWAIRGAGPNFGIVTEFKYRVHKQGPVFWQMLFYSPDKLKDCVSIVNQMHNISLAQKGGDFQVMMCYLTPPGYPDLHPGLRIFYNGPEEKAKELAAPAYALGPLSVSGGMCSFSDTTRIPPYLEFEGFDRYAASSAHLDYPLDEDLLLEVFTMFRNVIHKYGHHLLHPSKCILDLRNYEKVASVPIDATAYSGRFDVAWMIPDLQWDDPAMDSTMRMEVTSITAHIRERVREAKGDHVSGPRDATAIYPNISAGGEEKAKSVFGPNLPRLRVLKRKYDPNFIWNKWFPIVPA</sequence>